<dbReference type="EC" id="2.4.1.1" evidence="11 16"/>
<dbReference type="EMBL" id="M32598">
    <property type="protein sequence ID" value="AAA60231.1"/>
    <property type="molecule type" value="Genomic_DNA"/>
</dbReference>
<dbReference type="EMBL" id="M32579">
    <property type="protein sequence ID" value="AAA60231.1"/>
    <property type="status" value="JOINED"/>
    <property type="molecule type" value="Genomic_DNA"/>
</dbReference>
<dbReference type="EMBL" id="M32580">
    <property type="protein sequence ID" value="AAA60231.1"/>
    <property type="status" value="JOINED"/>
    <property type="molecule type" value="Genomic_DNA"/>
</dbReference>
<dbReference type="EMBL" id="M32581">
    <property type="protein sequence ID" value="AAA60231.1"/>
    <property type="status" value="JOINED"/>
    <property type="molecule type" value="Genomic_DNA"/>
</dbReference>
<dbReference type="EMBL" id="M32582">
    <property type="protein sequence ID" value="AAA60231.1"/>
    <property type="status" value="JOINED"/>
    <property type="molecule type" value="Genomic_DNA"/>
</dbReference>
<dbReference type="EMBL" id="M32583">
    <property type="protein sequence ID" value="AAA60231.1"/>
    <property type="status" value="JOINED"/>
    <property type="molecule type" value="Genomic_DNA"/>
</dbReference>
<dbReference type="EMBL" id="M32584">
    <property type="protein sequence ID" value="AAA60231.1"/>
    <property type="status" value="JOINED"/>
    <property type="molecule type" value="Genomic_DNA"/>
</dbReference>
<dbReference type="EMBL" id="M32585">
    <property type="protein sequence ID" value="AAA60231.1"/>
    <property type="status" value="JOINED"/>
    <property type="molecule type" value="Genomic_DNA"/>
</dbReference>
<dbReference type="EMBL" id="M32586">
    <property type="protein sequence ID" value="AAA60231.1"/>
    <property type="status" value="JOINED"/>
    <property type="molecule type" value="Genomic_DNA"/>
</dbReference>
<dbReference type="EMBL" id="M32587">
    <property type="protein sequence ID" value="AAA60231.1"/>
    <property type="status" value="JOINED"/>
    <property type="molecule type" value="Genomic_DNA"/>
</dbReference>
<dbReference type="EMBL" id="M32588">
    <property type="protein sequence ID" value="AAA60231.1"/>
    <property type="status" value="JOINED"/>
    <property type="molecule type" value="Genomic_DNA"/>
</dbReference>
<dbReference type="EMBL" id="M32589">
    <property type="protein sequence ID" value="AAA60231.1"/>
    <property type="status" value="JOINED"/>
    <property type="molecule type" value="Genomic_DNA"/>
</dbReference>
<dbReference type="EMBL" id="M32590">
    <property type="protein sequence ID" value="AAA60231.1"/>
    <property type="status" value="JOINED"/>
    <property type="molecule type" value="Genomic_DNA"/>
</dbReference>
<dbReference type="EMBL" id="M32591">
    <property type="protein sequence ID" value="AAA60231.1"/>
    <property type="status" value="JOINED"/>
    <property type="molecule type" value="Genomic_DNA"/>
</dbReference>
<dbReference type="EMBL" id="M32592">
    <property type="protein sequence ID" value="AAA60231.1"/>
    <property type="status" value="JOINED"/>
    <property type="molecule type" value="Genomic_DNA"/>
</dbReference>
<dbReference type="EMBL" id="M32593">
    <property type="protein sequence ID" value="AAA60231.1"/>
    <property type="status" value="JOINED"/>
    <property type="molecule type" value="Genomic_DNA"/>
</dbReference>
<dbReference type="EMBL" id="M32594">
    <property type="protein sequence ID" value="AAA60231.1"/>
    <property type="status" value="JOINED"/>
    <property type="molecule type" value="Genomic_DNA"/>
</dbReference>
<dbReference type="EMBL" id="M32595">
    <property type="protein sequence ID" value="AAA60231.1"/>
    <property type="status" value="JOINED"/>
    <property type="molecule type" value="Genomic_DNA"/>
</dbReference>
<dbReference type="EMBL" id="M32596">
    <property type="protein sequence ID" value="AAA60231.1"/>
    <property type="status" value="JOINED"/>
    <property type="molecule type" value="Genomic_DNA"/>
</dbReference>
<dbReference type="EMBL" id="M32597">
    <property type="protein sequence ID" value="AAA60231.1"/>
    <property type="status" value="JOINED"/>
    <property type="molecule type" value="Genomic_DNA"/>
</dbReference>
<dbReference type="EMBL" id="U94777">
    <property type="protein sequence ID" value="AAC52081.1"/>
    <property type="molecule type" value="Genomic_DNA"/>
</dbReference>
<dbReference type="EMBL" id="U94774">
    <property type="protein sequence ID" value="AAC52081.1"/>
    <property type="status" value="JOINED"/>
    <property type="molecule type" value="Genomic_DNA"/>
</dbReference>
<dbReference type="EMBL" id="U94775">
    <property type="protein sequence ID" value="AAC52081.1"/>
    <property type="status" value="JOINED"/>
    <property type="molecule type" value="Genomic_DNA"/>
</dbReference>
<dbReference type="EMBL" id="U94776">
    <property type="protein sequence ID" value="AAC52081.1"/>
    <property type="status" value="JOINED"/>
    <property type="molecule type" value="Genomic_DNA"/>
</dbReference>
<dbReference type="EMBL" id="AF066859">
    <property type="protein sequence ID" value="AAC17451.1"/>
    <property type="molecule type" value="mRNA"/>
</dbReference>
<dbReference type="EMBL" id="AK056607">
    <property type="protein sequence ID" value="BAG51762.1"/>
    <property type="molecule type" value="mRNA"/>
</dbReference>
<dbReference type="EMBL" id="AP001462">
    <property type="status" value="NOT_ANNOTATED_CDS"/>
    <property type="molecule type" value="Genomic_DNA"/>
</dbReference>
<dbReference type="EMBL" id="CH471076">
    <property type="protein sequence ID" value="EAW74284.1"/>
    <property type="molecule type" value="Genomic_DNA"/>
</dbReference>
<dbReference type="EMBL" id="BC126392">
    <property type="protein sequence ID" value="AAI26393.1"/>
    <property type="molecule type" value="mRNA"/>
</dbReference>
<dbReference type="EMBL" id="BC130514">
    <property type="protein sequence ID" value="AAI30515.1"/>
    <property type="molecule type" value="mRNA"/>
</dbReference>
<dbReference type="EMBL" id="X03031">
    <property type="protein sequence ID" value="CAA26834.1"/>
    <property type="molecule type" value="mRNA"/>
</dbReference>
<dbReference type="EMBL" id="M16013">
    <property type="protein sequence ID" value="AAA36216.1"/>
    <property type="molecule type" value="mRNA"/>
</dbReference>
<dbReference type="CCDS" id="CCDS53659.1">
    <molecule id="P11217-2"/>
</dbReference>
<dbReference type="CCDS" id="CCDS8079.1">
    <molecule id="P11217-1"/>
</dbReference>
<dbReference type="PIR" id="A27335">
    <property type="entry name" value="A27335"/>
</dbReference>
<dbReference type="RefSeq" id="NP_001158188.1">
    <molecule id="P11217-2"/>
    <property type="nucleotide sequence ID" value="NM_001164716.1"/>
</dbReference>
<dbReference type="RefSeq" id="NP_005600.1">
    <molecule id="P11217-1"/>
    <property type="nucleotide sequence ID" value="NM_005609.4"/>
</dbReference>
<dbReference type="PDB" id="1Z8D">
    <property type="method" value="X-ray"/>
    <property type="resolution" value="2.30 A"/>
    <property type="chains" value="A=1-842"/>
</dbReference>
<dbReference type="PDBsum" id="1Z8D"/>
<dbReference type="SMR" id="P11217"/>
<dbReference type="BioGRID" id="111795">
    <property type="interactions" value="98"/>
</dbReference>
<dbReference type="FunCoup" id="P11217">
    <property type="interactions" value="821"/>
</dbReference>
<dbReference type="IntAct" id="P11217">
    <property type="interactions" value="67"/>
</dbReference>
<dbReference type="MINT" id="P11217"/>
<dbReference type="STRING" id="9606.ENSP00000164139"/>
<dbReference type="BindingDB" id="P11217"/>
<dbReference type="ChEMBL" id="CHEMBL3526"/>
<dbReference type="DrugBank" id="DB07793">
    <property type="generic name" value="(2S)-N-[(3S)-1-(2-AMINO-2-OXOETHYL)-2-OXO-1,2,3,4-TETRAHYDROQUINOLIN-3-YL]-2-CHLORO-2H-THIENO[2,3-B]PYRROLE-5-CARBOXAMIDE"/>
</dbReference>
<dbReference type="DrugBank" id="DB03392">
    <property type="generic name" value="(3,4,5-Trihydroxy-6-Hydroxymethyl-Tetrahydro-Pyran-2-Yl)-Phosphoramidic Acid Dimethyl Ester"/>
</dbReference>
<dbReference type="DrugBank" id="DB07807">
    <property type="generic name" value="(3R,4R,5R)-5-(HYDROXYMETHYL)-1-(3-PHENYLPROPYL)PIPERIDINE-3,4-DIOL"/>
</dbReference>
<dbReference type="DrugBank" id="DB08500">
    <property type="generic name" value="(3S,5R,7R,8S,9S,10R)-7-(hydroxymethyl)-3-(2-naphthyl)-1,6-dioxa-2-azaspiro[4.5]decane-8,9,10-triol"/>
</dbReference>
<dbReference type="DrugBank" id="DB08503">
    <property type="generic name" value="(3S,5R,7R,8S,9S,10R)-7-(hydroxymethyl)-3-(4-methylphenyl)-1,6-dioxa-2-azaspiro[4.5]decane-8,9,10-triol"/>
</dbReference>
<dbReference type="DrugBank" id="DB08151">
    <property type="generic name" value="(5R,7R,8S,9S,10R)-7-(hydroxymethyl)-3-phenyl-1,6-dioxa-2-azaspiro[4.5]dec-2-ene-8,9,10-triol"/>
</dbReference>
<dbReference type="DrugBank" id="DB01843">
    <property type="generic name" value="(5S,7R,8S,9S,10R)-3-Amino-8,9,10-trihydroxy-7-(hydroxymethyl)-6-oxa-1,3-diazaspiro[4.5]decane-2,4-dione"/>
</dbReference>
<dbReference type="DrugBank" id="DB07792">
    <property type="generic name" value="(S)-2-CHLORO-N-(1-(2-(2-HYDROXYETHYLAMINO)-2-OXOETHYL)-2-OXO-1,2,3,4-TETRAHYDROQUINOLIN-3-YL)-6H-THIENO[2,3-B]PYRROLE-5-CARBOXAMIDE"/>
</dbReference>
<dbReference type="DrugBank" id="DB07949">
    <property type="generic name" value="({[(3E)-2'-Oxo-2',7'-dihydro-2,3'-biindol-3(7H)-ylidene]amino}oxy)acetic acid"/>
</dbReference>
<dbReference type="DrugBank" id="DB04544">
    <property type="generic name" value="1-Deoxy-1-acetylamino-beta-D-gluco-2-heptulopyranosonamide"/>
</dbReference>
<dbReference type="DrugBank" id="DB04013">
    <property type="generic name" value="1-Deoxy-1-methoxycarbamido-beta-D-gluco-2-heptulopyranosonamide"/>
</dbReference>
<dbReference type="DrugBank" id="DB03657">
    <property type="generic name" value="1-deoxy-1-methoxycarbamido-beta-D-glucopyranose"/>
</dbReference>
<dbReference type="DrugBank" id="DB04055">
    <property type="generic name" value="2,3-Dicarboxy-4-(2-Chloro-Phenyl)-1-Ethyl-5-Isopropoxycarbonyl-6-Methyl-Pyridinium"/>
</dbReference>
<dbReference type="DrugBank" id="DB03133">
    <property type="generic name" value="2-(Beta-D-Glucopyranosyl)-5-Methyl-1,2,3-Benzimidazole"/>
</dbReference>
<dbReference type="DrugBank" id="DB03250">
    <property type="generic name" value="2-(Beta-D-Glucopyranosyl)-5-Methyl-1,3,4-Benzothiazole"/>
</dbReference>
<dbReference type="DrugBank" id="DB03354">
    <property type="generic name" value="2-(Beta-D-Glucopyranosyl)-5-Methyl-1,3,4-Oxadiazole"/>
</dbReference>
<dbReference type="DrugBank" id="DB06986">
    <property type="generic name" value="2-CHLORO-N-[(1R,2R)-1-HYDROXY-2,3-DIHYDRO-1H-INDEN-2-YL]-6H-THIENO[2,3-B]PYRROLE-5-CARBOXAMIDE"/>
</dbReference>
<dbReference type="DrugBank" id="DB07066">
    <property type="generic name" value="2-CHLORO-N-[(3R)-2-OXO-1,2,3,4-TETRAHYDROQUINOLIN-3-YL]-6H-THIENO[2,3-B]PYRROLE-5-CARBOXAMIDE"/>
</dbReference>
<dbReference type="DrugBank" id="DB08322">
    <property type="generic name" value="2-DEOXY-3,4-BIS-O-[3-(4-HYDROXYPHENYL)PROPANOYL]-L-THREO-PENTARIC ACID"/>
</dbReference>
<dbReference type="DrugBank" id="DB02604">
    <property type="generic name" value="2-Deoxy-Glucose-6-Phosphate"/>
</dbReference>
<dbReference type="DrugBank" id="DB02447">
    <property type="generic name" value="3,8,9,10-tetrahydroxy-7-hydroxymethyl-6-oxa-1,3-diaza-spiro[4.5]decane-2,4-dione"/>
</dbReference>
<dbReference type="DrugBank" id="DB03067">
    <property type="generic name" value="4-{2,4-Bis[(3-Nitrobenzoyl)Amino]Phenoxy}Phthalic Acid"/>
</dbReference>
<dbReference type="DrugBank" id="DB04044">
    <property type="generic name" value="4-{2-[(3-Nitrobenzoyl)Amino]Phenoxy}Phthalic Acid"/>
</dbReference>
<dbReference type="DrugBank" id="DB04643">
    <property type="generic name" value="4-{3-CHLORO-4-[3-(2,4-DICHLORO-BENZOYL)-UREIDO]-PHENOXY}-BUTYRIC ACID"/>
</dbReference>
<dbReference type="DrugBank" id="DB04644">
    <property type="generic name" value="4-{4-[3-(2,4-DICHLORO-BENZOYL)-UREIDO]-2,3-DIMETHYL-PHENOXY}-BUTYRIC ACID"/>
</dbReference>
<dbReference type="DrugBank" id="DB04645">
    <property type="generic name" value="5-{3-[3-(2,4-DICHLORO-BENZOYL)-UREIDO]-2-METHYL-PHENOXY}-PENTANOIC ACID"/>
</dbReference>
<dbReference type="DrugBank" id="DB04642">
    <property type="generic name" value="7-{2,6-DICHLORO-4-[3-(2-CHLORO-BENZOYL)-UREIDO]-PHENOXY}-HEPTANOIC ACID"/>
</dbReference>
<dbReference type="DrugBank" id="DB02964">
    <property type="generic name" value="8,9,10-Trihydroxy-7-hydroxymethyl-2-thioxo-6-oxa-1,3-diaza-spiro[4.5]decan-4-one"/>
</dbReference>
<dbReference type="DrugBank" id="DB03479">
    <property type="generic name" value="8,9,10-trihydroxy-7-hydroxymethyl-3-methyl-6-oxa-1,3-diaza-spiro[4.5]decane-2,4-dione"/>
</dbReference>
<dbReference type="DrugBank" id="DB02720">
    <property type="generic name" value="alpha-D-glucopyranosyl-2-carboxylic acid amide"/>
</dbReference>
<dbReference type="DrugBank" id="DB02007">
    <property type="generic name" value="alpha-D-glucose 6-phosphate"/>
</dbReference>
<dbReference type="DrugBank" id="DB02843">
    <property type="generic name" value="alpha-D-glucose-1-phosphate"/>
</dbReference>
<dbReference type="DrugBank" id="DB03496">
    <property type="generic name" value="Alvocidib"/>
</dbReference>
<dbReference type="DrugBank" id="DB14054">
    <property type="generic name" value="Asiatic acid"/>
</dbReference>
<dbReference type="DrugBank" id="DB01823">
    <property type="generic name" value="Beta-D-Glucopyranose Spirohydantoin"/>
</dbReference>
<dbReference type="DrugBank" id="DB02379">
    <property type="generic name" value="Beta-D-Glucose"/>
</dbReference>
<dbReference type="DrugBank" id="DB16890">
    <property type="generic name" value="Betulin"/>
</dbReference>
<dbReference type="DrugBank" id="DB03286">
    <property type="generic name" value="C-(1-Azido-Alpha-D-Glucopyranosyl) Formamide"/>
</dbReference>
<dbReference type="DrugBank" id="DB02719">
    <property type="generic name" value="C-(1-hydrogyl-beta-D-glucopyranosyl) formamide"/>
</dbReference>
<dbReference type="DrugBank" id="DB03383">
    <property type="generic name" value="CP-320626"/>
</dbReference>
<dbReference type="DrugBank" id="DB04522">
    <property type="generic name" value="Dexfosfoserine"/>
</dbReference>
<dbReference type="DrugBank" id="DB04195">
    <property type="generic name" value="Heptulose-2-Phosphate"/>
</dbReference>
<dbReference type="DrugBank" id="DB02519">
    <property type="generic name" value="Indirubin-5-sulphonate"/>
</dbReference>
<dbReference type="DrugBank" id="DB04566">
    <property type="generic name" value="Inosinic Acid"/>
</dbReference>
<dbReference type="DrugBank" id="DB02348">
    <property type="generic name" value="Monofluorophosphate ion"/>
</dbReference>
<dbReference type="DrugBank" id="DB04083">
    <property type="generic name" value="N(6)-(pyridoxal phosphate)-L-lysine"/>
</dbReference>
<dbReference type="DrugBank" id="DB04295">
    <property type="generic name" value="N-(Benzoylcarbamoyl)-beta-D-glucopyranosylamine"/>
</dbReference>
<dbReference type="DrugBank" id="DB03835">
    <property type="generic name" value="N-[(5S,7R,8S,9S,10R)-8,9,10-Trihydroxy-7-(hydroxymethyl)-2,4-dioxo-6-oxa-1,3-diazaspiro[4.5]dec-3-yl]acetamide"/>
</dbReference>
<dbReference type="DrugBank" id="DB03218">
    <property type="generic name" value="N-acetyl-N'-beta-D-glucopyranosyl urea"/>
</dbReference>
<dbReference type="DrugBank" id="DB02320">
    <property type="generic name" value="N-beta-D-glucopyranosylacetamide"/>
</dbReference>
<dbReference type="DrugBank" id="DB02471">
    <property type="generic name" value="Nojirimycine Tetrazole"/>
</dbReference>
<dbReference type="DrugBank" id="DB00114">
    <property type="generic name" value="Pyridoxal phosphate"/>
</dbReference>
<dbReference type="DrugBank" id="DB15588">
    <property type="generic name" value="Ursolic acid"/>
</dbReference>
<dbReference type="CAZy" id="GT35">
    <property type="family name" value="Glycosyltransferase Family 35"/>
</dbReference>
<dbReference type="GlyGen" id="P11217">
    <property type="glycosylation" value="1 site, 1 O-linked glycan (1 site)"/>
</dbReference>
<dbReference type="iPTMnet" id="P11217"/>
<dbReference type="PhosphoSitePlus" id="P11217"/>
<dbReference type="SwissPalm" id="P11217"/>
<dbReference type="BioMuta" id="PYGM"/>
<dbReference type="DMDM" id="3041717"/>
<dbReference type="jPOST" id="P11217"/>
<dbReference type="MassIVE" id="P11217"/>
<dbReference type="PaxDb" id="9606-ENSP00000164139"/>
<dbReference type="PeptideAtlas" id="P11217"/>
<dbReference type="ProteomicsDB" id="52721">
    <molecule id="P11217-1"/>
</dbReference>
<dbReference type="ProteomicsDB" id="52722">
    <molecule id="P11217-2"/>
</dbReference>
<dbReference type="Pumba" id="P11217"/>
<dbReference type="Antibodypedia" id="29416">
    <property type="antibodies" value="317 antibodies from 29 providers"/>
</dbReference>
<dbReference type="DNASU" id="5837"/>
<dbReference type="Ensembl" id="ENST00000164139.4">
    <molecule id="P11217-1"/>
    <property type="protein sequence ID" value="ENSP00000164139.3"/>
    <property type="gene ID" value="ENSG00000068976.14"/>
</dbReference>
<dbReference type="Ensembl" id="ENST00000377432.7">
    <molecule id="P11217-2"/>
    <property type="protein sequence ID" value="ENSP00000366650.3"/>
    <property type="gene ID" value="ENSG00000068976.14"/>
</dbReference>
<dbReference type="GeneID" id="5837"/>
<dbReference type="KEGG" id="hsa:5837"/>
<dbReference type="MANE-Select" id="ENST00000164139.4">
    <property type="protein sequence ID" value="ENSP00000164139.3"/>
    <property type="RefSeq nucleotide sequence ID" value="NM_005609.4"/>
    <property type="RefSeq protein sequence ID" value="NP_005600.1"/>
</dbReference>
<dbReference type="UCSC" id="uc001oax.5">
    <molecule id="P11217-1"/>
    <property type="organism name" value="human"/>
</dbReference>
<dbReference type="AGR" id="HGNC:9726"/>
<dbReference type="CTD" id="5837"/>
<dbReference type="DisGeNET" id="5837"/>
<dbReference type="GeneCards" id="PYGM"/>
<dbReference type="GeneReviews" id="PYGM"/>
<dbReference type="HGNC" id="HGNC:9726">
    <property type="gene designation" value="PYGM"/>
</dbReference>
<dbReference type="HPA" id="ENSG00000068976">
    <property type="expression patterns" value="Group enriched (skeletal muscle, tongue)"/>
</dbReference>
<dbReference type="MalaCards" id="PYGM"/>
<dbReference type="MIM" id="232600">
    <property type="type" value="phenotype"/>
</dbReference>
<dbReference type="MIM" id="608455">
    <property type="type" value="gene"/>
</dbReference>
<dbReference type="neXtProt" id="NX_P11217"/>
<dbReference type="OpenTargets" id="ENSG00000068976"/>
<dbReference type="Orphanet" id="368">
    <property type="disease" value="Glycogen storage disease due to muscle glycogen phosphorylase deficiency"/>
</dbReference>
<dbReference type="PharmGKB" id="PA34069"/>
<dbReference type="VEuPathDB" id="HostDB:ENSG00000068976"/>
<dbReference type="eggNOG" id="KOG2099">
    <property type="taxonomic scope" value="Eukaryota"/>
</dbReference>
<dbReference type="GeneTree" id="ENSGT00950000183148"/>
<dbReference type="HOGENOM" id="CLU_010198_1_1_1"/>
<dbReference type="InParanoid" id="P11217"/>
<dbReference type="OMA" id="GIEPCRC"/>
<dbReference type="OrthoDB" id="9215500at2759"/>
<dbReference type="PAN-GO" id="P11217">
    <property type="GO annotations" value="4 GO annotations based on evolutionary models"/>
</dbReference>
<dbReference type="PhylomeDB" id="P11217"/>
<dbReference type="TreeFam" id="TF300309"/>
<dbReference type="BioCyc" id="MetaCyc:HS00949-MONOMER"/>
<dbReference type="PathwayCommons" id="P11217"/>
<dbReference type="Reactome" id="R-HSA-70221">
    <property type="pathway name" value="Glycogen breakdown (glycogenolysis)"/>
</dbReference>
<dbReference type="SignaLink" id="P11217"/>
<dbReference type="SIGNOR" id="P11217"/>
<dbReference type="BioGRID-ORCS" id="5837">
    <property type="hits" value="32 hits in 1152 CRISPR screens"/>
</dbReference>
<dbReference type="CD-CODE" id="FB4E32DD">
    <property type="entry name" value="Presynaptic clusters and postsynaptic densities"/>
</dbReference>
<dbReference type="EvolutionaryTrace" id="P11217"/>
<dbReference type="GenomeRNAi" id="5837"/>
<dbReference type="Pharos" id="P11217">
    <property type="development level" value="Tchem"/>
</dbReference>
<dbReference type="PRO" id="PR:P11217"/>
<dbReference type="Proteomes" id="UP000005640">
    <property type="component" value="Chromosome 11"/>
</dbReference>
<dbReference type="RNAct" id="P11217">
    <property type="molecule type" value="protein"/>
</dbReference>
<dbReference type="Bgee" id="ENSG00000068976">
    <property type="expression patterns" value="Expressed in skeletal muscle tissue of biceps brachii and 145 other cell types or tissues"/>
</dbReference>
<dbReference type="GO" id="GO:0005737">
    <property type="term" value="C:cytoplasm"/>
    <property type="evidence" value="ECO:0000318"/>
    <property type="project" value="GO_Central"/>
</dbReference>
<dbReference type="GO" id="GO:0005829">
    <property type="term" value="C:cytosol"/>
    <property type="evidence" value="ECO:0000304"/>
    <property type="project" value="Reactome"/>
</dbReference>
<dbReference type="GO" id="GO:0070062">
    <property type="term" value="C:extracellular exosome"/>
    <property type="evidence" value="ECO:0007005"/>
    <property type="project" value="UniProtKB"/>
</dbReference>
<dbReference type="GO" id="GO:0008184">
    <property type="term" value="F:glycogen phosphorylase activity"/>
    <property type="evidence" value="ECO:0000314"/>
    <property type="project" value="UniProtKB"/>
</dbReference>
<dbReference type="GO" id="GO:0000166">
    <property type="term" value="F:nucleotide binding"/>
    <property type="evidence" value="ECO:0007669"/>
    <property type="project" value="UniProtKB-KW"/>
</dbReference>
<dbReference type="GO" id="GO:0030170">
    <property type="term" value="F:pyridoxal phosphate binding"/>
    <property type="evidence" value="ECO:0000318"/>
    <property type="project" value="GO_Central"/>
</dbReference>
<dbReference type="GO" id="GO:0005980">
    <property type="term" value="P:glycogen catabolic process"/>
    <property type="evidence" value="ECO:0000314"/>
    <property type="project" value="UniProtKB"/>
</dbReference>
<dbReference type="GO" id="GO:0005977">
    <property type="term" value="P:glycogen metabolic process"/>
    <property type="evidence" value="ECO:0000304"/>
    <property type="project" value="ProtInc"/>
</dbReference>
<dbReference type="CDD" id="cd04300">
    <property type="entry name" value="GT35_Glycogen_Phosphorylase"/>
    <property type="match status" value="1"/>
</dbReference>
<dbReference type="FunFam" id="3.40.50.2000:FF:000005">
    <property type="entry name" value="Alpha-1,4 glucan phosphorylase"/>
    <property type="match status" value="1"/>
</dbReference>
<dbReference type="FunFam" id="3.40.50.2000:FF:000153">
    <property type="entry name" value="Alpha-1,4 glucan phosphorylase"/>
    <property type="match status" value="1"/>
</dbReference>
<dbReference type="FunFam" id="3.40.50.2000:FF:000197">
    <property type="entry name" value="Alpha-1,4 glucan phosphorylase"/>
    <property type="match status" value="1"/>
</dbReference>
<dbReference type="Gene3D" id="3.40.50.2000">
    <property type="entry name" value="Glycogen Phosphorylase B"/>
    <property type="match status" value="2"/>
</dbReference>
<dbReference type="InterPro" id="IPR011833">
    <property type="entry name" value="Glycg_phsphrylas"/>
</dbReference>
<dbReference type="InterPro" id="IPR000811">
    <property type="entry name" value="Glyco_trans_35"/>
</dbReference>
<dbReference type="InterPro" id="IPR035090">
    <property type="entry name" value="Pyridoxal_P_attach_site"/>
</dbReference>
<dbReference type="NCBIfam" id="TIGR02093">
    <property type="entry name" value="P_ylase"/>
    <property type="match status" value="1"/>
</dbReference>
<dbReference type="PANTHER" id="PTHR11468">
    <property type="entry name" value="GLYCOGEN PHOSPHORYLASE"/>
    <property type="match status" value="1"/>
</dbReference>
<dbReference type="PANTHER" id="PTHR11468:SF32">
    <property type="entry name" value="GLYCOGEN PHOSPHORYLASE, MUSCLE FORM"/>
    <property type="match status" value="1"/>
</dbReference>
<dbReference type="Pfam" id="PF00343">
    <property type="entry name" value="Phosphorylase"/>
    <property type="match status" value="1"/>
</dbReference>
<dbReference type="PIRSF" id="PIRSF000460">
    <property type="entry name" value="Pprylas_GlgP"/>
    <property type="match status" value="1"/>
</dbReference>
<dbReference type="SUPFAM" id="SSF53756">
    <property type="entry name" value="UDP-Glycosyltransferase/glycogen phosphorylase"/>
    <property type="match status" value="1"/>
</dbReference>
<dbReference type="PROSITE" id="PS00102">
    <property type="entry name" value="PHOSPHORYLASE"/>
    <property type="match status" value="1"/>
</dbReference>
<keyword id="KW-0002">3D-structure</keyword>
<keyword id="KW-0007">Acetylation</keyword>
<keyword id="KW-0021">Allosteric enzyme</keyword>
<keyword id="KW-0025">Alternative splicing</keyword>
<keyword id="KW-0119">Carbohydrate metabolism</keyword>
<keyword id="KW-0225">Disease variant</keyword>
<keyword id="KW-0321">Glycogen metabolism</keyword>
<keyword id="KW-0322">Glycogen storage disease</keyword>
<keyword id="KW-0328">Glycosyltransferase</keyword>
<keyword id="KW-0547">Nucleotide-binding</keyword>
<keyword id="KW-0597">Phosphoprotein</keyword>
<keyword id="KW-1267">Proteomics identification</keyword>
<keyword id="KW-0663">Pyridoxal phosphate</keyword>
<keyword id="KW-1185">Reference proteome</keyword>
<keyword id="KW-0808">Transferase</keyword>
<reference key="1">
    <citation type="journal article" date="1987" name="Proteins">
        <title>Intron/exon structure of the human gene for the muscle isozyme of glycogen phosphorylase.</title>
        <authorList>
            <person name="Burke J."/>
            <person name="Hwang P.K."/>
            <person name="Anderson L."/>
            <person name="Lebo R."/>
            <person name="Gorin F."/>
            <person name="Fletterick R.J."/>
        </authorList>
    </citation>
    <scope>NUCLEOTIDE SEQUENCE [GENOMIC DNA]</scope>
</reference>
<reference key="2">
    <citation type="journal article" date="1998" name="Hum. Mutat.">
        <title>Molecular diagnosis of McArdle disease: revised genomic structure of the myophosphorylase gene and identification of a novel mutation.</title>
        <authorList>
            <person name="Kubisch C."/>
            <person name="Wicklein E.M."/>
            <person name="Jentsch T.J."/>
        </authorList>
    </citation>
    <scope>NUCLEOTIDE SEQUENCE [GENOMIC DNA]</scope>
</reference>
<reference key="3">
    <citation type="submission" date="1998-05" db="EMBL/GenBank/DDBJ databases">
        <authorList>
            <person name="Carty M.D."/>
            <person name="Clancy Y.C."/>
            <person name="Soeller W.C."/>
        </authorList>
    </citation>
    <scope>NUCLEOTIDE SEQUENCE [MRNA] (ISOFORM 1)</scope>
    <source>
        <tissue>Muscle</tissue>
    </source>
</reference>
<reference key="4">
    <citation type="journal article" date="2004" name="Nat. Genet.">
        <title>Complete sequencing and characterization of 21,243 full-length human cDNAs.</title>
        <authorList>
            <person name="Ota T."/>
            <person name="Suzuki Y."/>
            <person name="Nishikawa T."/>
            <person name="Otsuki T."/>
            <person name="Sugiyama T."/>
            <person name="Irie R."/>
            <person name="Wakamatsu A."/>
            <person name="Hayashi K."/>
            <person name="Sato H."/>
            <person name="Nagai K."/>
            <person name="Kimura K."/>
            <person name="Makita H."/>
            <person name="Sekine M."/>
            <person name="Obayashi M."/>
            <person name="Nishi T."/>
            <person name="Shibahara T."/>
            <person name="Tanaka T."/>
            <person name="Ishii S."/>
            <person name="Yamamoto J."/>
            <person name="Saito K."/>
            <person name="Kawai Y."/>
            <person name="Isono Y."/>
            <person name="Nakamura Y."/>
            <person name="Nagahari K."/>
            <person name="Murakami K."/>
            <person name="Yasuda T."/>
            <person name="Iwayanagi T."/>
            <person name="Wagatsuma M."/>
            <person name="Shiratori A."/>
            <person name="Sudo H."/>
            <person name="Hosoiri T."/>
            <person name="Kaku Y."/>
            <person name="Kodaira H."/>
            <person name="Kondo H."/>
            <person name="Sugawara M."/>
            <person name="Takahashi M."/>
            <person name="Kanda K."/>
            <person name="Yokoi T."/>
            <person name="Furuya T."/>
            <person name="Kikkawa E."/>
            <person name="Omura Y."/>
            <person name="Abe K."/>
            <person name="Kamihara K."/>
            <person name="Katsuta N."/>
            <person name="Sato K."/>
            <person name="Tanikawa M."/>
            <person name="Yamazaki M."/>
            <person name="Ninomiya K."/>
            <person name="Ishibashi T."/>
            <person name="Yamashita H."/>
            <person name="Murakawa K."/>
            <person name="Fujimori K."/>
            <person name="Tanai H."/>
            <person name="Kimata M."/>
            <person name="Watanabe M."/>
            <person name="Hiraoka S."/>
            <person name="Chiba Y."/>
            <person name="Ishida S."/>
            <person name="Ono Y."/>
            <person name="Takiguchi S."/>
            <person name="Watanabe S."/>
            <person name="Yosida M."/>
            <person name="Hotuta T."/>
            <person name="Kusano J."/>
            <person name="Kanehori K."/>
            <person name="Takahashi-Fujii A."/>
            <person name="Hara H."/>
            <person name="Tanase T.-O."/>
            <person name="Nomura Y."/>
            <person name="Togiya S."/>
            <person name="Komai F."/>
            <person name="Hara R."/>
            <person name="Takeuchi K."/>
            <person name="Arita M."/>
            <person name="Imose N."/>
            <person name="Musashino K."/>
            <person name="Yuuki H."/>
            <person name="Oshima A."/>
            <person name="Sasaki N."/>
            <person name="Aotsuka S."/>
            <person name="Yoshikawa Y."/>
            <person name="Matsunawa H."/>
            <person name="Ichihara T."/>
            <person name="Shiohata N."/>
            <person name="Sano S."/>
            <person name="Moriya S."/>
            <person name="Momiyama H."/>
            <person name="Satoh N."/>
            <person name="Takami S."/>
            <person name="Terashima Y."/>
            <person name="Suzuki O."/>
            <person name="Nakagawa S."/>
            <person name="Senoh A."/>
            <person name="Mizoguchi H."/>
            <person name="Goto Y."/>
            <person name="Shimizu F."/>
            <person name="Wakebe H."/>
            <person name="Hishigaki H."/>
            <person name="Watanabe T."/>
            <person name="Sugiyama A."/>
            <person name="Takemoto M."/>
            <person name="Kawakami B."/>
            <person name="Yamazaki M."/>
            <person name="Watanabe K."/>
            <person name="Kumagai A."/>
            <person name="Itakura S."/>
            <person name="Fukuzumi Y."/>
            <person name="Fujimori Y."/>
            <person name="Komiyama M."/>
            <person name="Tashiro H."/>
            <person name="Tanigami A."/>
            <person name="Fujiwara T."/>
            <person name="Ono T."/>
            <person name="Yamada K."/>
            <person name="Fujii Y."/>
            <person name="Ozaki K."/>
            <person name="Hirao M."/>
            <person name="Ohmori Y."/>
            <person name="Kawabata A."/>
            <person name="Hikiji T."/>
            <person name="Kobatake N."/>
            <person name="Inagaki H."/>
            <person name="Ikema Y."/>
            <person name="Okamoto S."/>
            <person name="Okitani R."/>
            <person name="Kawakami T."/>
            <person name="Noguchi S."/>
            <person name="Itoh T."/>
            <person name="Shigeta K."/>
            <person name="Senba T."/>
            <person name="Matsumura K."/>
            <person name="Nakajima Y."/>
            <person name="Mizuno T."/>
            <person name="Morinaga M."/>
            <person name="Sasaki M."/>
            <person name="Togashi T."/>
            <person name="Oyama M."/>
            <person name="Hata H."/>
            <person name="Watanabe M."/>
            <person name="Komatsu T."/>
            <person name="Mizushima-Sugano J."/>
            <person name="Satoh T."/>
            <person name="Shirai Y."/>
            <person name="Takahashi Y."/>
            <person name="Nakagawa K."/>
            <person name="Okumura K."/>
            <person name="Nagase T."/>
            <person name="Nomura N."/>
            <person name="Kikuchi H."/>
            <person name="Masuho Y."/>
            <person name="Yamashita R."/>
            <person name="Nakai K."/>
            <person name="Yada T."/>
            <person name="Nakamura Y."/>
            <person name="Ohara O."/>
            <person name="Isogai T."/>
            <person name="Sugano S."/>
        </authorList>
    </citation>
    <scope>NUCLEOTIDE SEQUENCE [LARGE SCALE MRNA] (ISOFORM 2)</scope>
    <source>
        <tissue>Tongue</tissue>
    </source>
</reference>
<reference key="5">
    <citation type="journal article" date="2006" name="Nature">
        <title>Human chromosome 11 DNA sequence and analysis including novel gene identification.</title>
        <authorList>
            <person name="Taylor T.D."/>
            <person name="Noguchi H."/>
            <person name="Totoki Y."/>
            <person name="Toyoda A."/>
            <person name="Kuroki Y."/>
            <person name="Dewar K."/>
            <person name="Lloyd C."/>
            <person name="Itoh T."/>
            <person name="Takeda T."/>
            <person name="Kim D.-W."/>
            <person name="She X."/>
            <person name="Barlow K.F."/>
            <person name="Bloom T."/>
            <person name="Bruford E."/>
            <person name="Chang J.L."/>
            <person name="Cuomo C.A."/>
            <person name="Eichler E."/>
            <person name="FitzGerald M.G."/>
            <person name="Jaffe D.B."/>
            <person name="LaButti K."/>
            <person name="Nicol R."/>
            <person name="Park H.-S."/>
            <person name="Seaman C."/>
            <person name="Sougnez C."/>
            <person name="Yang X."/>
            <person name="Zimmer A.R."/>
            <person name="Zody M.C."/>
            <person name="Birren B.W."/>
            <person name="Nusbaum C."/>
            <person name="Fujiyama A."/>
            <person name="Hattori M."/>
            <person name="Rogers J."/>
            <person name="Lander E.S."/>
            <person name="Sakaki Y."/>
        </authorList>
    </citation>
    <scope>NUCLEOTIDE SEQUENCE [LARGE SCALE GENOMIC DNA]</scope>
</reference>
<reference key="6">
    <citation type="submission" date="2005-07" db="EMBL/GenBank/DDBJ databases">
        <authorList>
            <person name="Mural R.J."/>
            <person name="Istrail S."/>
            <person name="Sutton G."/>
            <person name="Florea L."/>
            <person name="Halpern A.L."/>
            <person name="Mobarry C.M."/>
            <person name="Lippert R."/>
            <person name="Walenz B."/>
            <person name="Shatkay H."/>
            <person name="Dew I."/>
            <person name="Miller J.R."/>
            <person name="Flanigan M.J."/>
            <person name="Edwards N.J."/>
            <person name="Bolanos R."/>
            <person name="Fasulo D."/>
            <person name="Halldorsson B.V."/>
            <person name="Hannenhalli S."/>
            <person name="Turner R."/>
            <person name="Yooseph S."/>
            <person name="Lu F."/>
            <person name="Nusskern D.R."/>
            <person name="Shue B.C."/>
            <person name="Zheng X.H."/>
            <person name="Zhong F."/>
            <person name="Delcher A.L."/>
            <person name="Huson D.H."/>
            <person name="Kravitz S.A."/>
            <person name="Mouchard L."/>
            <person name="Reinert K."/>
            <person name="Remington K.A."/>
            <person name="Clark A.G."/>
            <person name="Waterman M.S."/>
            <person name="Eichler E.E."/>
            <person name="Adams M.D."/>
            <person name="Hunkapiller M.W."/>
            <person name="Myers E.W."/>
            <person name="Venter J.C."/>
        </authorList>
    </citation>
    <scope>NUCLEOTIDE SEQUENCE [LARGE SCALE GENOMIC DNA]</scope>
</reference>
<reference key="7">
    <citation type="journal article" date="2004" name="Genome Res.">
        <title>The status, quality, and expansion of the NIH full-length cDNA project: the Mammalian Gene Collection (MGC).</title>
        <authorList>
            <consortium name="The MGC Project Team"/>
        </authorList>
    </citation>
    <scope>NUCLEOTIDE SEQUENCE [LARGE SCALE MRNA] (ISOFORM 1)</scope>
</reference>
<reference key="8">
    <citation type="journal article" date="1985" name="Eur. J. Biochem.">
        <title>Comparative sequence analysis of rat, rabbit, and human muscle glycogen phosphorylase cDNAs.</title>
        <authorList>
            <person name="Hwang P.K."/>
            <person name="See Y.P."/>
            <person name="Vincentini A.M."/>
            <person name="Powers M.A."/>
            <person name="Fletterick R.J."/>
            <person name="Crerar M.M."/>
        </authorList>
    </citation>
    <scope>NUCLEOTIDE SEQUENCE [MRNA] OF 676-842 (ISOFORM 1)</scope>
</reference>
<reference key="9">
    <citation type="journal article" date="1987" name="J. Clin. Invest.">
        <title>Molecular mechanisms of McArdle's disease (muscle glycogen phosphorylase deficiency). RNA and DNA analysis.</title>
        <authorList>
            <person name="Gautron S."/>
            <person name="Daegelen D."/>
            <person name="Mennecier F."/>
            <person name="Dubocq D."/>
            <person name="Kahn A."/>
            <person name="Dreyfus J.-C."/>
        </authorList>
    </citation>
    <scope>NUCLEOTIDE SEQUENCE [MRNA] OF 455-676 (ISOFORM 1)</scope>
</reference>
<reference key="10">
    <citation type="journal article" date="1975" name="J. Biol. Chem.">
        <title>Regulation of glycogen phosphorylase. Role of the peptide region surrounding the phosphoserine residue in determining enzyme properties.</title>
        <authorList>
            <person name="Carty T.J."/>
            <person name="Tu J."/>
            <person name="Graves D.J."/>
        </authorList>
    </citation>
    <scope>CATALYTIC ACTIVITY</scope>
    <scope>ACTIVITY REGULATION</scope>
    <scope>SUBUNIT</scope>
    <scope>PHOSPHORYLATION AT SER-15</scope>
</reference>
<reference evidence="24" key="11">
    <citation type="journal article" date="2006" name="Proteins">
        <title>The crystal structure of human muscle glycogen phosphorylase a with bound glucose and AMP: an intermediate conformation with T-state and R-state features.</title>
        <authorList>
            <person name="Lukacs C.M."/>
            <person name="Oikonomakos N.G."/>
            <person name="Crowther R.L."/>
            <person name="Hong L.N."/>
            <person name="Kammlott R.U."/>
            <person name="Levin W."/>
            <person name="Li S."/>
            <person name="Liu C.M."/>
            <person name="Lucas-McGady D."/>
            <person name="Pietranico S."/>
            <person name="Reik L."/>
        </authorList>
    </citation>
    <scope>X-RAY CRYSTALLOGRAPHY (2.30 ANGSTROMS) IN COMPLEX WITH AMP AND GLUCOSE</scope>
    <scope>SUBUNIT</scope>
</reference>
<reference key="12">
    <citation type="journal article" date="1993" name="N. Engl. J. Med.">
        <title>Molecular genetic heterogeneity of myophosphorylase deficiency (McArdle's disease).</title>
        <authorList>
            <person name="Tsujino S."/>
            <person name="Shanske S."/>
            <person name="Dimauro S."/>
        </authorList>
    </citation>
    <scope>VARIANTS GSD5 50-ARG--ILE-842 DEL; SER-205 AND THR-543</scope>
    <scope>FUNCTION</scope>
    <scope>CATALYTIC ACTIVITY</scope>
</reference>
<reference key="13">
    <citation type="journal article" date="1995" name="Hum. Mutat.">
        <title>Two novel missense mutations (E654K, L396P) in Caucasian patients with myophosphorylase deficiency (McArdle's disease).</title>
        <authorList>
            <person name="Tsujino S."/>
            <person name="Shanske S."/>
            <person name="Martinuzzi A."/>
            <person name="Heiman-Patterson T."/>
            <person name="Dimauro S."/>
        </authorList>
    </citation>
    <scope>VARIANTS GSD5 PRO-397 AND LYS-655</scope>
</reference>
<reference key="14">
    <citation type="journal article" date="1995" name="Muscle Nerve">
        <title>The molecular genetic basis of myophosphorylase deficiency (McArdle's disease).</title>
        <authorList>
            <person name="Tsujino S."/>
            <person name="Shanske S."/>
            <person name="Nonaka I."/>
            <person name="DiMauro S."/>
        </authorList>
    </citation>
    <scope>VARIANTS GSD5 SER-205; PRO-292; PRO-397; THR-543; LYS-655 AND PHE-709 DEL</scope>
</reference>
<reference key="15">
    <citation type="journal article" date="1998" name="Ann. Neurol.">
        <title>Mutation analysis in myophosphorylase deficiency (McArdle's disease).</title>
        <authorList>
            <person name="Vorgerd M."/>
            <person name="Kubisch C."/>
            <person name="Burwinkel B."/>
            <person name="Reichmann H."/>
            <person name="Mortier W."/>
            <person name="Tettenborn B."/>
            <person name="Pongratz D."/>
            <person name="Lindemuth R."/>
            <person name="Tegenthoff M."/>
            <person name="Malin J.P."/>
            <person name="Kilimann M.W."/>
        </authorList>
    </citation>
    <scope>VARIANTS GSD5 GLU-666 AND ARG-686</scope>
</reference>
<reference key="16">
    <citation type="journal article" date="1999" name="Muscle Nerve">
        <title>A new mutation in the regulatory domain of the myophosphorylase gene affecting protein dimer contact.</title>
        <authorList>
            <person name="Gamez J."/>
            <person name="Fernandez R."/>
            <person name="Bruno C."/>
            <person name="Andreu A.L."/>
            <person name="Cervera C."/>
            <person name="Navarro C."/>
            <person name="Schwartz S."/>
            <person name="Dimauro S."/>
        </authorList>
    </citation>
    <scope>VARIANT GSD5 PRO-116</scope>
</reference>
<reference key="17">
    <citation type="journal article" date="1999" name="Neuromuscul. Disord.">
        <title>A new mutation in the myophosphorylase gene (Asn684Tyr) in a Spanish patient with McArdle's disease.</title>
        <authorList>
            <person name="Andreu A.L."/>
            <person name="Bruno C."/>
            <person name="Tamburino L."/>
            <person name="Gamez J."/>
            <person name="Shanske S."/>
            <person name="Cervera C."/>
            <person name="Navarro C."/>
            <person name="DiMauro S."/>
        </authorList>
    </citation>
    <scope>VARIANTS GSD5 SER-205 AND TYR-685</scope>
</reference>
<reference key="18">
    <citation type="journal article" date="1999" name="Neuromuscul. Disord.">
        <title>McArdle's disease associated with homozygosity for the missense mutation Gly204Ser of the myophosphorylase gene in a Spanish patient.</title>
        <authorList>
            <person name="Rubio J.C."/>
            <person name="Martin M.A."/>
            <person name="Garcia A."/>
            <person name="Campos Y."/>
            <person name="Cabello A."/>
            <person name="Culebras J.M."/>
            <person name="Arenas J."/>
        </authorList>
    </citation>
    <scope>VARIANT GSD5 SER-205</scope>
</reference>
<reference key="19">
    <citation type="journal article" date="2000" name="Arch. Neurol.">
        <title>A novel missense mutation (W797R) in the myophosphorylase gene in Spanish patients with McArdle disease.</title>
        <authorList>
            <person name="Fernandez R."/>
            <person name="Navarro C."/>
            <person name="Andreu A.L."/>
            <person name="Bruno C."/>
            <person name="Shanske S."/>
            <person name="Gamez J."/>
            <person name="Teijeira S."/>
            <person name="Hernandez I."/>
            <person name="Teijeiro A."/>
            <person name="Fernandez J.M."/>
            <person name="Musumeci O."/>
            <person name="DiMauro S."/>
        </authorList>
    </citation>
    <scope>VARIANT GSD5 ARG-798</scope>
</reference>
<reference key="20">
    <citation type="journal article" date="2000" name="Muscle Nerve">
        <title>A missense mutation W797R in the myophosphorylase gene in a Spanish patient with McArdle's disease.</title>
        <authorList>
            <person name="Rubio J.C."/>
            <person name="Martin M.A."/>
            <person name="Campos Y."/>
            <person name="Auciello R."/>
            <person name="Cabello A."/>
            <person name="Arenas J."/>
        </authorList>
    </citation>
    <scope>VARIANT GSD5 ARG-798</scope>
</reference>
<reference key="21">
    <citation type="journal article" date="2000" name="Neuromuscul. Disord.">
        <title>A missense mutation T487N in the myophosphorylase gene in a Spanish patient with McArdle's disease.</title>
        <authorList>
            <person name="Rubio J.C."/>
            <person name="Martin M.A."/>
            <person name="Campos Y."/>
            <person name="Cabello A."/>
            <person name="Arenas J."/>
        </authorList>
    </citation>
    <scope>VARIANT GSD5 ASN-488</scope>
</reference>
<reference key="22">
    <citation type="journal article" date="2000" name="Neuromuscul. Disord.">
        <title>A homozygous missense mutation (A659D) in the myophosphorylase gene in a Spanish patient with McArdle's disease.</title>
        <authorList>
            <person name="Martin M.A."/>
            <person name="Rubio J.C."/>
            <person name="Campos Y."/>
            <person name="Ricoy J.R."/>
            <person name="Cabello A."/>
            <person name="Arenas J."/>
        </authorList>
    </citation>
    <scope>VARIANT GSD5 ASP-660</scope>
</reference>
<reference key="23">
    <citation type="journal article" date="2001" name="Ann. Neurol.">
        <title>Molecular heterogeneity of myophosphorylase deficiency (McArdle's disease): a genotype-phenotype correlation study.</title>
        <authorList>
            <person name="Martin M.A."/>
            <person name="Rubio J.C."/>
            <person name="Buchbinder J."/>
            <person name="Fernandez-Hojas R."/>
            <person name="del Hoyo P."/>
            <person name="Teijeira S."/>
            <person name="Gamez J."/>
            <person name="Navarro C."/>
            <person name="Fernandez J.M."/>
            <person name="Cabello A."/>
            <person name="Campos Y."/>
            <person name="Cervera C."/>
            <person name="Culebras J.M."/>
            <person name="Andreu A.L."/>
            <person name="Fletterick R.J."/>
            <person name="Arenas J."/>
        </authorList>
    </citation>
    <scope>VARIANTS GSD5 PRO-116; TRP-194; SER-205; LYS-349; ASN-488; TRP-602; ASP-660; TYR-685; VAL-704 AND ARG-798</scope>
</reference>
<reference key="24">
    <citation type="journal article" date="2002" name="Neuromuscul. Disord.">
        <title>Two new mutations in the myophosphorylase gene in Italian patients with McArdle's disease.</title>
        <authorList>
            <person name="Bruno C."/>
            <person name="Lanzillo R."/>
            <person name="Biedi C."/>
            <person name="Iadicicco L."/>
            <person name="Minetti C."/>
            <person name="Santoro L."/>
        </authorList>
    </citation>
    <scope>VARIANT GSD5 PRO-687</scope>
</reference>
<evidence type="ECO:0000250" key="1">
    <source>
        <dbReference type="UniProtKB" id="P00489"/>
    </source>
</evidence>
<evidence type="ECO:0000250" key="2">
    <source>
        <dbReference type="UniProtKB" id="P09812"/>
    </source>
</evidence>
<evidence type="ECO:0000250" key="3">
    <source>
        <dbReference type="UniProtKB" id="Q9WUB3"/>
    </source>
</evidence>
<evidence type="ECO:0000269" key="4">
    <source>
    </source>
</evidence>
<evidence type="ECO:0000269" key="5">
    <source>
    </source>
</evidence>
<evidence type="ECO:0000269" key="6">
    <source>
    </source>
</evidence>
<evidence type="ECO:0000269" key="7">
    <source>
    </source>
</evidence>
<evidence type="ECO:0000269" key="8">
    <source>
    </source>
</evidence>
<evidence type="ECO:0000269" key="9">
    <source>
    </source>
</evidence>
<evidence type="ECO:0000269" key="10">
    <source>
    </source>
</evidence>
<evidence type="ECO:0000269" key="11">
    <source>
    </source>
</evidence>
<evidence type="ECO:0000269" key="12">
    <source>
    </source>
</evidence>
<evidence type="ECO:0000269" key="13">
    <source>
    </source>
</evidence>
<evidence type="ECO:0000269" key="14">
    <source>
    </source>
</evidence>
<evidence type="ECO:0000269" key="15">
    <source>
    </source>
</evidence>
<evidence type="ECO:0000269" key="16">
    <source>
    </source>
</evidence>
<evidence type="ECO:0000269" key="17">
    <source>
    </source>
</evidence>
<evidence type="ECO:0000269" key="18">
    <source>
    </source>
</evidence>
<evidence type="ECO:0000303" key="19">
    <source>
    </source>
</evidence>
<evidence type="ECO:0000303" key="20">
    <source>
    </source>
</evidence>
<evidence type="ECO:0000305" key="21"/>
<evidence type="ECO:0000305" key="22">
    <source>
    </source>
</evidence>
<evidence type="ECO:0000312" key="23">
    <source>
        <dbReference type="HGNC" id="HGNC:9726"/>
    </source>
</evidence>
<evidence type="ECO:0007744" key="24">
    <source>
        <dbReference type="PDB" id="1Z8D"/>
    </source>
</evidence>
<evidence type="ECO:0007829" key="25">
    <source>
        <dbReference type="PDB" id="1Z8D"/>
    </source>
</evidence>
<accession>P11217</accession>
<accession>A0AVK1</accession>
<accession>A6NDY6</accession>
<comment type="function">
    <text evidence="16">Allosteric enzyme that catalyzes the rate-limiting step in glycogen catabolism, the phosphorolytic cleavage of glycogen to produce glucose-1-phosphate, and plays a central role in maintaining cellular and organismal glucose homeostasis.</text>
</comment>
<comment type="catalytic activity">
    <reaction evidence="11 16">
        <text>[(1-&gt;4)-alpha-D-glucosyl](n) + phosphate = [(1-&gt;4)-alpha-D-glucosyl](n-1) + alpha-D-glucose 1-phosphate</text>
        <dbReference type="Rhea" id="RHEA:41732"/>
        <dbReference type="Rhea" id="RHEA-COMP:9584"/>
        <dbReference type="Rhea" id="RHEA-COMP:9586"/>
        <dbReference type="ChEBI" id="CHEBI:15444"/>
        <dbReference type="ChEBI" id="CHEBI:43474"/>
        <dbReference type="ChEBI" id="CHEBI:58601"/>
        <dbReference type="EC" id="2.4.1.1"/>
    </reaction>
    <physiologicalReaction direction="left-to-right" evidence="16">
        <dbReference type="Rhea" id="RHEA:41733"/>
    </physiologicalReaction>
</comment>
<comment type="cofactor">
    <cofactor evidence="1">
        <name>pyridoxal 5'-phosphate</name>
        <dbReference type="ChEBI" id="CHEBI:597326"/>
    </cofactor>
</comment>
<comment type="activity regulation">
    <text evidence="11">Allosterically regulated through the non-covalent binding of metabolites, being activated by AMP and inhibited by ATP, ADP, and glucose-6-phosphate. The activity is also controlled by post-translational modifications including phosphorylation.</text>
</comment>
<comment type="subunit">
    <text evidence="11 14">Homodimer (PubMed:1150650, PubMed:16523484). Homotetramer; to form the enzymatically active phosphorylase A (PubMed:1150650).</text>
</comment>
<comment type="interaction">
    <interactant intactId="EBI-357469">
        <id>P11217</id>
    </interactant>
    <interactant intactId="EBI-741158">
        <id>Q96HA8</id>
        <label>NTAQ1</label>
    </interactant>
    <organismsDiffer>false</organismsDiffer>
    <experiments>4</experiments>
</comment>
<comment type="interaction">
    <interactant intactId="EBI-357469">
        <id>P11217</id>
    </interactant>
    <interactant intactId="EBI-1053424">
        <id>O43741</id>
        <label>PRKAB2</label>
    </interactant>
    <organismsDiffer>false</organismsDiffer>
    <experiments>7</experiments>
</comment>
<comment type="interaction">
    <interactant intactId="EBI-357469">
        <id>P11217</id>
    </interactant>
    <interactant intactId="EBI-1047231">
        <id>P11216</id>
        <label>PYGB</label>
    </interactant>
    <organismsDiffer>false</organismsDiffer>
    <experiments>5</experiments>
</comment>
<comment type="interaction">
    <interactant intactId="EBI-357469">
        <id>P11217</id>
    </interactant>
    <interactant intactId="EBI-2511865">
        <id>P06737</id>
        <label>PYGL</label>
    </interactant>
    <organismsDiffer>false</organismsDiffer>
    <experiments>3</experiments>
</comment>
<comment type="interaction">
    <interactant intactId="EBI-357469">
        <id>P11217</id>
    </interactant>
    <interactant intactId="EBI-25492395">
        <id>PRO_0000449633</id>
        <label>rep</label>
        <dbReference type="UniProtKB" id="P0DTD1"/>
    </interactant>
    <organismsDiffer>true</organismsDiffer>
    <experiments>3</experiments>
</comment>
<comment type="alternative products">
    <event type="alternative splicing"/>
    <isoform>
        <id>P11217-1</id>
        <name>1</name>
        <sequence type="displayed"/>
    </isoform>
    <isoform>
        <id>P11217-2</id>
        <name>2</name>
        <sequence type="described" ref="VSP_043047"/>
    </isoform>
</comment>
<comment type="PTM">
    <text evidence="11">Phosphorylation of Ser-15 converts phosphorylase B (unphosphorylated) to phosphorylase A.</text>
</comment>
<comment type="disease" evidence="4 5 6 7 8 9 10 12 13 15 16 17 18">
    <disease id="DI-00525">
        <name>Glycogen storage disease 5</name>
        <acronym>GSD5</acronym>
        <description>A metabolic disorder resulting in myopathy characterized by exercise intolerance, cramps, muscle weakness and recurrent myoglobinuria.</description>
        <dbReference type="MIM" id="232600"/>
    </disease>
    <text>The disease is caused by variants affecting the gene represented in this entry.</text>
</comment>
<comment type="similarity">
    <text evidence="21">Belongs to the glycogen phosphorylase family.</text>
</comment>
<gene>
    <name evidence="23" type="primary">PYGM</name>
</gene>
<protein>
    <recommendedName>
        <fullName evidence="22">Glycogen phosphorylase, muscle form</fullName>
        <ecNumber evidence="11 16">2.4.1.1</ecNumber>
    </recommendedName>
    <alternativeName>
        <fullName evidence="20">Myophosphorylase</fullName>
    </alternativeName>
</protein>
<feature type="initiator methionine" description="Removed" evidence="1">
    <location>
        <position position="1"/>
    </location>
</feature>
<feature type="chain" id="PRO_0000188529" description="Glycogen phosphorylase, muscle form">
    <location>
        <begin position="2"/>
        <end position="842"/>
    </location>
</feature>
<feature type="binding site" evidence="14 24">
    <location>
        <position position="43"/>
    </location>
    <ligand>
        <name>AMP</name>
        <dbReference type="ChEBI" id="CHEBI:456215"/>
    </ligand>
</feature>
<feature type="binding site" evidence="14 24">
    <location>
        <position position="76"/>
    </location>
    <ligand>
        <name>AMP</name>
        <dbReference type="ChEBI" id="CHEBI:456215"/>
    </ligand>
</feature>
<feature type="binding site" evidence="14 24">
    <location>
        <begin position="310"/>
        <end position="319"/>
    </location>
    <ligand>
        <name>AMP</name>
        <dbReference type="ChEBI" id="CHEBI:456215"/>
    </ligand>
</feature>
<feature type="site" description="Involved in the association of subunits" evidence="1">
    <location>
        <position position="109"/>
    </location>
</feature>
<feature type="site" description="Involved in the association of subunits" evidence="1">
    <location>
        <position position="143"/>
    </location>
</feature>
<feature type="site" description="May be involved in allosteric control" evidence="1">
    <location>
        <position position="156"/>
    </location>
</feature>
<feature type="modified residue" description="N-acetylserine" evidence="1">
    <location>
        <position position="2"/>
    </location>
</feature>
<feature type="modified residue" description="Phosphoserine; by PHK; in form phosphorylase A" evidence="11">
    <location>
        <position position="15"/>
    </location>
</feature>
<feature type="modified residue" description="Phosphotyrosine" evidence="2">
    <location>
        <position position="204"/>
    </location>
</feature>
<feature type="modified residue" description="Phosphotyrosine" evidence="2">
    <location>
        <position position="227"/>
    </location>
</feature>
<feature type="modified residue" description="Phosphoserine" evidence="3">
    <location>
        <position position="430"/>
    </location>
</feature>
<feature type="modified residue" description="Phosphotyrosine" evidence="3">
    <location>
        <position position="473"/>
    </location>
</feature>
<feature type="modified residue" description="Phosphoserine" evidence="2">
    <location>
        <position position="514"/>
    </location>
</feature>
<feature type="modified residue" description="N6-(pyridoxal phosphate)lysine" evidence="1">
    <location>
        <position position="681"/>
    </location>
</feature>
<feature type="modified residue" description="Phosphoserine" evidence="2">
    <location>
        <position position="747"/>
    </location>
</feature>
<feature type="modified residue" description="Phosphoserine" evidence="2">
    <location>
        <position position="748"/>
    </location>
</feature>
<feature type="splice variant" id="VSP_043047" description="In isoform 2." evidence="19">
    <location>
        <begin position="82"/>
        <end position="169"/>
    </location>
</feature>
<feature type="sequence variant" id="VAR_085195" description="In GSD5." evidence="16">
    <location>
        <begin position="50"/>
        <end position="842"/>
    </location>
</feature>
<feature type="sequence variant" id="VAR_014002" description="In GSD5; dbSNP:rs776680924." evidence="6 12">
    <original>L</original>
    <variation>P</variation>
    <location>
        <position position="116"/>
    </location>
</feature>
<feature type="sequence variant" id="VAR_014003" description="In GSD5; dbSNP:rs376581557." evidence="12">
    <original>R</original>
    <variation>W</variation>
    <location>
        <position position="194"/>
    </location>
</feature>
<feature type="sequence variant" id="VAR_003431" description="In GSD5; dbSNP:rs119103251." evidence="4 5 12 15 16">
    <original>G</original>
    <variation>S</variation>
    <location>
        <position position="205"/>
    </location>
</feature>
<feature type="sequence variant" id="VAR_014004" description="In GSD5; rare mutation; dbSNP:rs780375860." evidence="15">
    <original>L</original>
    <variation>P</variation>
    <location>
        <position position="292"/>
    </location>
</feature>
<feature type="sequence variant" id="VAR_014005" description="In GSD5." evidence="12">
    <original>E</original>
    <variation>K</variation>
    <location>
        <position position="349"/>
    </location>
</feature>
<feature type="sequence variant" id="VAR_003432" description="In GSD5; dbSNP:rs1005687078." evidence="15 17">
    <original>L</original>
    <variation>P</variation>
    <location>
        <position position="397"/>
    </location>
</feature>
<feature type="sequence variant" id="VAR_061198" description="In dbSNP:rs11231866.">
    <original>R</original>
    <variation>G</variation>
    <location>
        <position position="414"/>
    </location>
</feature>
<feature type="sequence variant" id="VAR_014006" description="In GSD5; dbSNP:rs1555134900." evidence="9 12">
    <original>T</original>
    <variation>N</variation>
    <location>
        <position position="488"/>
    </location>
</feature>
<feature type="sequence variant" id="VAR_003433" description="In GSD5; dbSNP:rs119103252." evidence="15 16">
    <original>K</original>
    <variation>T</variation>
    <location>
        <position position="543"/>
    </location>
</feature>
<feature type="sequence variant" id="VAR_014007" description="In GSD5; dbSNP:rs750195683." evidence="12">
    <original>R</original>
    <variation>W</variation>
    <location>
        <position position="602"/>
    </location>
</feature>
<feature type="sequence variant" id="VAR_003434" description="In GSD5; dbSNP:rs119103253." evidence="15 17">
    <original>E</original>
    <variation>K</variation>
    <location>
        <position position="655"/>
    </location>
</feature>
<feature type="sequence variant" id="VAR_014008" description="In GSD5." evidence="10 12">
    <original>A</original>
    <variation>D</variation>
    <location>
        <position position="660"/>
    </location>
</feature>
<feature type="sequence variant" id="VAR_014009" description="In GSD5; dbSNP:rs119103256." evidence="18">
    <original>Q</original>
    <variation>E</variation>
    <location>
        <position position="666"/>
    </location>
</feature>
<feature type="sequence variant" id="VAR_014010" description="In GSD5." evidence="4 12">
    <original>N</original>
    <variation>Y</variation>
    <location>
        <position position="685"/>
    </location>
</feature>
<feature type="sequence variant" id="VAR_014011" description="In GSD5; dbSNP:rs144081869." evidence="18">
    <original>G</original>
    <variation>R</variation>
    <location>
        <position position="686"/>
    </location>
</feature>
<feature type="sequence variant" id="VAR_014012" description="In GSD5." evidence="13">
    <original>A</original>
    <variation>P</variation>
    <location>
        <position position="687"/>
    </location>
</feature>
<feature type="sequence variant" id="VAR_014013" description="In GSD5; dbSNP:rs1483102315." evidence="12">
    <original>A</original>
    <variation>V</variation>
    <location>
        <position position="704"/>
    </location>
</feature>
<feature type="sequence variant" id="VAR_014014" description="In GSD5; common in Japanese patients." evidence="15">
    <location>
        <position position="709"/>
    </location>
</feature>
<feature type="sequence variant" id="VAR_014015" description="In GSD5; dbSNP:rs119103258." evidence="7 8 12">
    <original>W</original>
    <variation>R</variation>
    <location>
        <position position="798"/>
    </location>
</feature>
<feature type="sequence conflict" description="In Ref. 1; AAA60231." evidence="21" ref="1">
    <original>L</original>
    <variation>W</variation>
    <location>
        <position position="791"/>
    </location>
</feature>
<feature type="helix" evidence="25">
    <location>
        <begin position="7"/>
        <end position="10"/>
    </location>
</feature>
<feature type="helix" evidence="25">
    <location>
        <begin position="11"/>
        <end position="13"/>
    </location>
</feature>
<feature type="helix" evidence="25">
    <location>
        <begin position="25"/>
        <end position="38"/>
    </location>
</feature>
<feature type="turn" evidence="25">
    <location>
        <begin position="44"/>
        <end position="46"/>
    </location>
</feature>
<feature type="helix" evidence="25">
    <location>
        <begin position="49"/>
        <end position="78"/>
    </location>
</feature>
<feature type="strand" evidence="25">
    <location>
        <begin position="82"/>
        <end position="86"/>
    </location>
</feature>
<feature type="helix" evidence="25">
    <location>
        <begin position="96"/>
        <end position="102"/>
    </location>
</feature>
<feature type="helix" evidence="25">
    <location>
        <begin position="106"/>
        <end position="114"/>
    </location>
</feature>
<feature type="turn" evidence="25">
    <location>
        <begin position="115"/>
        <end position="117"/>
    </location>
</feature>
<feature type="helix" evidence="25">
    <location>
        <begin position="120"/>
        <end position="126"/>
    </location>
</feature>
<feature type="helix" evidence="25">
    <location>
        <begin position="136"/>
        <end position="150"/>
    </location>
</feature>
<feature type="strand" evidence="25">
    <location>
        <begin position="155"/>
        <end position="160"/>
    </location>
</feature>
<feature type="strand" evidence="25">
    <location>
        <begin position="168"/>
        <end position="172"/>
    </location>
</feature>
<feature type="strand" evidence="25">
    <location>
        <begin position="175"/>
        <end position="179"/>
    </location>
</feature>
<feature type="turn" evidence="25">
    <location>
        <begin position="183"/>
        <end position="186"/>
    </location>
</feature>
<feature type="helix" evidence="25">
    <location>
        <begin position="195"/>
        <end position="197"/>
    </location>
</feature>
<feature type="strand" evidence="25">
    <location>
        <begin position="199"/>
        <end position="204"/>
    </location>
</feature>
<feature type="strand" evidence="25">
    <location>
        <begin position="206"/>
        <end position="210"/>
    </location>
</feature>
<feature type="strand" evidence="25">
    <location>
        <begin position="213"/>
        <end position="218"/>
    </location>
</feature>
<feature type="strand" evidence="25">
    <location>
        <begin position="220"/>
        <end position="232"/>
    </location>
</feature>
<feature type="strand" evidence="25">
    <location>
        <begin position="234"/>
        <end position="236"/>
    </location>
</feature>
<feature type="strand" evidence="25">
    <location>
        <begin position="239"/>
        <end position="248"/>
    </location>
</feature>
<feature type="helix" evidence="25">
    <location>
        <begin position="263"/>
        <end position="270"/>
    </location>
</feature>
<feature type="helix" evidence="25">
    <location>
        <begin position="271"/>
        <end position="277"/>
    </location>
</feature>
<feature type="helix" evidence="25">
    <location>
        <begin position="291"/>
        <end position="313"/>
    </location>
</feature>
<feature type="helix" evidence="25">
    <location>
        <begin position="330"/>
        <end position="333"/>
    </location>
</feature>
<feature type="strand" evidence="25">
    <location>
        <begin position="334"/>
        <end position="341"/>
    </location>
</feature>
<feature type="turn" evidence="25">
    <location>
        <begin position="342"/>
        <end position="345"/>
    </location>
</feature>
<feature type="helix" evidence="25">
    <location>
        <begin position="346"/>
        <end position="356"/>
    </location>
</feature>
<feature type="helix" evidence="25">
    <location>
        <begin position="362"/>
        <end position="372"/>
    </location>
</feature>
<feature type="strand" evidence="25">
    <location>
        <begin position="373"/>
        <end position="376"/>
    </location>
</feature>
<feature type="helix" evidence="25">
    <location>
        <begin position="382"/>
        <end position="384"/>
    </location>
</feature>
<feature type="strand" evidence="25">
    <location>
        <begin position="387"/>
        <end position="389"/>
    </location>
</feature>
<feature type="helix" evidence="25">
    <location>
        <begin position="390"/>
        <end position="396"/>
    </location>
</feature>
<feature type="helix" evidence="25">
    <location>
        <begin position="398"/>
        <end position="418"/>
    </location>
</feature>
<feature type="helix" evidence="25">
    <location>
        <begin position="423"/>
        <end position="429"/>
    </location>
</feature>
<feature type="strand" evidence="25">
    <location>
        <begin position="431"/>
        <end position="433"/>
    </location>
</feature>
<feature type="strand" evidence="25">
    <location>
        <begin position="435"/>
        <end position="437"/>
    </location>
</feature>
<feature type="strand" evidence="25">
    <location>
        <begin position="439"/>
        <end position="441"/>
    </location>
</feature>
<feature type="helix" evidence="25">
    <location>
        <begin position="442"/>
        <end position="448"/>
    </location>
</feature>
<feature type="strand" evidence="25">
    <location>
        <begin position="451"/>
        <end position="457"/>
    </location>
</feature>
<feature type="helix" evidence="25">
    <location>
        <begin position="458"/>
        <end position="466"/>
    </location>
</feature>
<feature type="turn" evidence="25">
    <location>
        <begin position="467"/>
        <end position="469"/>
    </location>
</feature>
<feature type="helix" evidence="25">
    <location>
        <begin position="470"/>
        <end position="475"/>
    </location>
</feature>
<feature type="helix" evidence="25">
    <location>
        <begin position="477"/>
        <end position="479"/>
    </location>
</feature>
<feature type="strand" evidence="25">
    <location>
        <begin position="480"/>
        <end position="482"/>
    </location>
</feature>
<feature type="helix" evidence="25">
    <location>
        <begin position="490"/>
        <end position="495"/>
    </location>
</feature>
<feature type="helix" evidence="25">
    <location>
        <begin position="498"/>
        <end position="508"/>
    </location>
</feature>
<feature type="helix" evidence="25">
    <location>
        <begin position="511"/>
        <end position="514"/>
    </location>
</feature>
<feature type="helix" evidence="25">
    <location>
        <begin position="516"/>
        <end position="525"/>
    </location>
</feature>
<feature type="helix" evidence="25">
    <location>
        <begin position="529"/>
        <end position="553"/>
    </location>
</feature>
<feature type="strand" evidence="25">
    <location>
        <begin position="562"/>
        <end position="569"/>
    </location>
</feature>
<feature type="turn" evidence="25">
    <location>
        <begin position="573"/>
        <end position="576"/>
    </location>
</feature>
<feature type="helix" evidence="25">
    <location>
        <begin position="577"/>
        <end position="593"/>
    </location>
</feature>
<feature type="strand" evidence="25">
    <location>
        <begin position="602"/>
        <end position="607"/>
    </location>
</feature>
<feature type="helix" evidence="25">
    <location>
        <begin position="615"/>
        <end position="631"/>
    </location>
</feature>
<feature type="turn" evidence="25">
    <location>
        <begin position="635"/>
        <end position="637"/>
    </location>
</feature>
<feature type="helix" evidence="25">
    <location>
        <begin position="638"/>
        <end position="640"/>
    </location>
</feature>
<feature type="strand" evidence="25">
    <location>
        <begin position="641"/>
        <end position="646"/>
    </location>
</feature>
<feature type="helix" evidence="25">
    <location>
        <begin position="651"/>
        <end position="657"/>
    </location>
</feature>
<feature type="helix" evidence="25">
    <location>
        <begin position="658"/>
        <end position="660"/>
    </location>
</feature>
<feature type="strand" evidence="25">
    <location>
        <begin position="662"/>
        <end position="666"/>
    </location>
</feature>
<feature type="turn" evidence="25">
    <location>
        <begin position="670"/>
        <end position="672"/>
    </location>
</feature>
<feature type="turn" evidence="25">
    <location>
        <begin position="683"/>
        <end position="686"/>
    </location>
</feature>
<feature type="strand" evidence="25">
    <location>
        <begin position="688"/>
        <end position="691"/>
    </location>
</feature>
<feature type="helix" evidence="25">
    <location>
        <begin position="697"/>
        <end position="704"/>
    </location>
</feature>
<feature type="helix" evidence="25">
    <location>
        <begin position="706"/>
        <end position="708"/>
    </location>
</feature>
<feature type="strand" evidence="25">
    <location>
        <begin position="709"/>
        <end position="711"/>
    </location>
</feature>
<feature type="helix" evidence="25">
    <location>
        <begin position="716"/>
        <end position="725"/>
    </location>
</feature>
<feature type="helix" evidence="25">
    <location>
        <begin position="730"/>
        <end position="733"/>
    </location>
</feature>
<feature type="helix" evidence="25">
    <location>
        <begin position="737"/>
        <end position="748"/>
    </location>
</feature>
<feature type="turn" evidence="25">
    <location>
        <begin position="749"/>
        <end position="751"/>
    </location>
</feature>
<feature type="turn" evidence="25">
    <location>
        <begin position="756"/>
        <end position="759"/>
    </location>
</feature>
<feature type="helix" evidence="25">
    <location>
        <begin position="760"/>
        <end position="768"/>
    </location>
</feature>
<feature type="helix" evidence="25">
    <location>
        <begin position="774"/>
        <end position="792"/>
    </location>
</feature>
<feature type="helix" evidence="25">
    <location>
        <begin position="795"/>
        <end position="806"/>
    </location>
</feature>
<feature type="helix" evidence="25">
    <location>
        <begin position="810"/>
        <end position="812"/>
    </location>
</feature>
<feature type="helix" evidence="25">
    <location>
        <begin position="814"/>
        <end position="824"/>
    </location>
</feature>
<proteinExistence type="evidence at protein level"/>
<organism>
    <name type="scientific">Homo sapiens</name>
    <name type="common">Human</name>
    <dbReference type="NCBI Taxonomy" id="9606"/>
    <lineage>
        <taxon>Eukaryota</taxon>
        <taxon>Metazoa</taxon>
        <taxon>Chordata</taxon>
        <taxon>Craniata</taxon>
        <taxon>Vertebrata</taxon>
        <taxon>Euteleostomi</taxon>
        <taxon>Mammalia</taxon>
        <taxon>Eutheria</taxon>
        <taxon>Euarchontoglires</taxon>
        <taxon>Primates</taxon>
        <taxon>Haplorrhini</taxon>
        <taxon>Catarrhini</taxon>
        <taxon>Hominidae</taxon>
        <taxon>Homo</taxon>
    </lineage>
</organism>
<name>PYGM_HUMAN</name>
<sequence>MSRPLSDQEKRKQISVRGLAGVENVTELKKNFNRHLHFTLVKDRNVATPRDYYFALAHTVRDHLVGRWIRTQQHYYEKDPKRIYYLSLEFYMGRTLQNTMVNLALENACDEATYQLGLDMEELEEIEEDAGLGNGGLGRLAACFLDSMATLGLAAYGYGIRYEFGIFNQKISGGWQMEEADDWLRYGNPWEKARPEFTLPVHFYGHVEHTSQGAKWVDTQVVLAMPYDTPVPGYRNNVVNTMRLWSAKAPNDFNLKDFNVGGYIQAVLDRNLAENISRVLYPNDNFFEGKELRLKQEYFVVAATLQDIIRRFKSSKFGCRDPVRTNFDAFPDKVAIQLNDTHPSLAIPELMRILVDLERMDWDKAWDVTVRTCAYTNHTVLPEALERWPVHLLETLLPRHLQIIYEINQRFLNRVAAAFPGDVDRLRRMSLVEEGAVKRINMAHLCIAGSHAVNGVARIHSEILKKTIFKDFYELEPHKFQNKTNGITPRRWLVLCNPGLAEVIAERIGEDFISDLDQLRKLLSFVDDEAFIRDVAKVKQENKLKFAAYLEREYKVHINPNSLFDIQVKRIHEYKRQLLNCLHVITLYNRIKREPNKFFVPRTVMIGGKAAPGYHMAKMIIRLVTAIGDVVNHDPAVGDRLRVIFLENYRVSLAEKVIPAADLSEQISTAGTEASGTGNMKFMLNGALTIGTMDGANVEMAEEAGEENFFIFGMRVEDVDKLDQRGYNAQEYYDRIPELRQVIEQLSSGFFSPKQPDLFKDIVNMLMHHDRFKVFADYEDYIKCQEKVSALYKNPREWTRMVIRNIATSGKFSSDRTIAQYAREIWGVEPSRQRLPAPDEAI</sequence>